<name>LAEA_ASPFS</name>
<protein>
    <recommendedName>
        <fullName evidence="5">Secondary metabolism regulator laeA</fullName>
    </recommendedName>
    <alternativeName>
        <fullName evidence="5">Methyltransferase laeA</fullName>
        <ecNumber evidence="1">2.1.1.-</ecNumber>
    </alternativeName>
    <alternativeName>
        <fullName evidence="5">Velvet complex subunit laeA</fullName>
    </alternativeName>
</protein>
<evidence type="ECO:0000250" key="1">
    <source>
        <dbReference type="UniProtKB" id="C8VQG9"/>
    </source>
</evidence>
<evidence type="ECO:0000256" key="2">
    <source>
        <dbReference type="SAM" id="MobiDB-lite"/>
    </source>
</evidence>
<evidence type="ECO:0000269" key="3">
    <source>
    </source>
</evidence>
<evidence type="ECO:0000303" key="4">
    <source>
    </source>
</evidence>
<evidence type="ECO:0000305" key="5"/>
<reference key="1">
    <citation type="journal article" date="2015" name="Fungal Biol.">
        <title>Overexpression of the laeA gene leads to increased production of cyclopiazonic acid in Aspergillus fumisynnematus.</title>
        <authorList>
            <person name="Hong E.J."/>
            <person name="Kim N.K."/>
            <person name="Lee D."/>
            <person name="Kim W.G."/>
            <person name="Lee I."/>
        </authorList>
    </citation>
    <scope>NUCLEOTIDE SEQUENCE [GENOMIC DNA]</scope>
    <scope>FUNCTION</scope>
    <source>
        <strain>F746</strain>
    </source>
</reference>
<dbReference type="EC" id="2.1.1.-" evidence="1"/>
<dbReference type="EMBL" id="KP769770">
    <property type="protein sequence ID" value="AKP07636.1"/>
    <property type="molecule type" value="Genomic_DNA"/>
</dbReference>
<dbReference type="SMR" id="A0A0H4LJX8"/>
<dbReference type="GO" id="GO:0005634">
    <property type="term" value="C:nucleus"/>
    <property type="evidence" value="ECO:0007669"/>
    <property type="project" value="UniProtKB-SubCell"/>
</dbReference>
<dbReference type="GO" id="GO:0008168">
    <property type="term" value="F:methyltransferase activity"/>
    <property type="evidence" value="ECO:0007669"/>
    <property type="project" value="UniProtKB-KW"/>
</dbReference>
<dbReference type="GO" id="GO:0032259">
    <property type="term" value="P:methylation"/>
    <property type="evidence" value="ECO:0007669"/>
    <property type="project" value="UniProtKB-KW"/>
</dbReference>
<dbReference type="GO" id="GO:0030435">
    <property type="term" value="P:sporulation resulting in formation of a cellular spore"/>
    <property type="evidence" value="ECO:0007669"/>
    <property type="project" value="UniProtKB-KW"/>
</dbReference>
<dbReference type="CDD" id="cd02440">
    <property type="entry name" value="AdoMet_MTases"/>
    <property type="match status" value="1"/>
</dbReference>
<dbReference type="FunFam" id="3.40.50.150:FF:000393">
    <property type="entry name" value="Regulator of secondary metabolism LaeA"/>
    <property type="match status" value="1"/>
</dbReference>
<dbReference type="Gene3D" id="3.40.50.150">
    <property type="entry name" value="Vaccinia Virus protein VP39"/>
    <property type="match status" value="1"/>
</dbReference>
<dbReference type="InterPro" id="IPR029063">
    <property type="entry name" value="SAM-dependent_MTases_sf"/>
</dbReference>
<dbReference type="PANTHER" id="PTHR43591">
    <property type="entry name" value="METHYLTRANSFERASE"/>
    <property type="match status" value="1"/>
</dbReference>
<dbReference type="PANTHER" id="PTHR43591:SF30">
    <property type="entry name" value="PROTEIN-METHIONINE METHYLTRANSFERASE LAEA"/>
    <property type="match status" value="1"/>
</dbReference>
<dbReference type="Pfam" id="PF13489">
    <property type="entry name" value="Methyltransf_23"/>
    <property type="match status" value="1"/>
</dbReference>
<dbReference type="SUPFAM" id="SSF53335">
    <property type="entry name" value="S-adenosyl-L-methionine-dependent methyltransferases"/>
    <property type="match status" value="1"/>
</dbReference>
<keyword id="KW-0489">Methyltransferase</keyword>
<keyword id="KW-0539">Nucleus</keyword>
<keyword id="KW-0949">S-adenosyl-L-methionine</keyword>
<keyword id="KW-0749">Sporulation</keyword>
<keyword id="KW-0804">Transcription</keyword>
<keyword id="KW-0805">Transcription regulation</keyword>
<keyword id="KW-0808">Transferase</keyword>
<gene>
    <name evidence="4" type="primary">laeA</name>
</gene>
<accession>A0A0H4LJX8</accession>
<comment type="function">
    <text evidence="1 3">Methyltransferase that performs automethylation (By similarity). No other methyl-accepting substrate has been identified yet (By similarity). Component of the velvet transcription factor complex that acts as a global regulator for secondary metabolite gene expression (PubMed:26466873). Controls the expression of the cyclopiazonic acid (CPA) gene clusters (PubMed:26466873). Regulates also pigmentation and conidial head morphology (PubMed:26466873).</text>
</comment>
<comment type="catalytic activity">
    <reaction evidence="1">
        <text>L-methionyl-[protein] + S-adenosyl-L-methionine = S-methyl-L-methionyl-[protein] + S-adenosyl-L-homocysteine</text>
        <dbReference type="Rhea" id="RHEA:60560"/>
        <dbReference type="Rhea" id="RHEA-COMP:12313"/>
        <dbReference type="Rhea" id="RHEA-COMP:15592"/>
        <dbReference type="ChEBI" id="CHEBI:16044"/>
        <dbReference type="ChEBI" id="CHEBI:57856"/>
        <dbReference type="ChEBI" id="CHEBI:59789"/>
        <dbReference type="ChEBI" id="CHEBI:142742"/>
    </reaction>
    <physiologicalReaction direction="left-to-right" evidence="1">
        <dbReference type="Rhea" id="RHEA:60561"/>
    </physiologicalReaction>
</comment>
<comment type="subunit">
    <text evidence="1">Component of the heterotrimeric velvet complex composed of laeA, veA and velB; VeA acting as a bridging protein between laeA and velB (By similarity).</text>
</comment>
<comment type="subcellular location">
    <subcellularLocation>
        <location evidence="1">Nucleus</location>
    </subcellularLocation>
</comment>
<comment type="similarity">
    <text evidence="5">Belongs to the methyltransferase superfamily. LaeA methyltransferase family.</text>
</comment>
<proteinExistence type="inferred from homology"/>
<feature type="chain" id="PRO_0000435757" description="Secondary metabolism regulator laeA">
    <location>
        <begin position="1"/>
        <end position="373"/>
    </location>
</feature>
<feature type="region of interest" description="Disordered" evidence="2">
    <location>
        <begin position="1"/>
        <end position="21"/>
    </location>
</feature>
<feature type="region of interest" description="Disordered" evidence="2">
    <location>
        <begin position="53"/>
        <end position="81"/>
    </location>
</feature>
<feature type="compositionally biased region" description="Polar residues" evidence="2">
    <location>
        <begin position="67"/>
        <end position="77"/>
    </location>
</feature>
<sequence length="373" mass="42548">MFLNGQGGQRPPTVASPPLNVRGSISSDFNALGRSRNNSDAMDIYTITDRGPAAERDPAAGRWHANGSPSINSTSSKNPDRYPCYQENGRTYHGYRKGIYMLPCDEQEQDRLDIFHKLFTVARVSDGLIYAPHPTNGRFLDLGCGTGIWAIDVANKYPEAFVVGVDLAPIQPPNHPRNCDFYAPFDFESLWALGEDSWDLIHMQMGSGSVASWPNLYRRIYSHLRPGAWFEQVEIDFEPRCDDRSLEGLAIRQWYQLLKQATEETMRPVAHNSRETIRNLQEAGFTEIDHQMVGLPLNPWHQDEHERRVARWYNLAISESIETMSLAPFSRVFGWPIERIKQIAADVKSEAFNKEIHTYNILHIYQARKPLAN</sequence>
<organism>
    <name type="scientific">Aspergillus fumisynnematus</name>
    <dbReference type="NCBI Taxonomy" id="286432"/>
    <lineage>
        <taxon>Eukaryota</taxon>
        <taxon>Fungi</taxon>
        <taxon>Dikarya</taxon>
        <taxon>Ascomycota</taxon>
        <taxon>Pezizomycotina</taxon>
        <taxon>Eurotiomycetes</taxon>
        <taxon>Eurotiomycetidae</taxon>
        <taxon>Eurotiales</taxon>
        <taxon>Aspergillaceae</taxon>
        <taxon>Aspergillus</taxon>
        <taxon>Aspergillus subgen. Fumigati</taxon>
    </lineage>
</organism>